<protein>
    <recommendedName>
        <fullName evidence="1">Large ribosomal subunit protein uL23</fullName>
    </recommendedName>
    <alternativeName>
        <fullName evidence="2">50S ribosomal protein L23</fullName>
    </alternativeName>
</protein>
<organism>
    <name type="scientific">Acidithiobacillus ferrooxidans (strain ATCC 23270 / DSM 14882 / CIP 104768 / NCIMB 8455)</name>
    <name type="common">Ferrobacillus ferrooxidans (strain ATCC 23270)</name>
    <dbReference type="NCBI Taxonomy" id="243159"/>
    <lineage>
        <taxon>Bacteria</taxon>
        <taxon>Pseudomonadati</taxon>
        <taxon>Pseudomonadota</taxon>
        <taxon>Acidithiobacillia</taxon>
        <taxon>Acidithiobacillales</taxon>
        <taxon>Acidithiobacillaceae</taxon>
        <taxon>Acidithiobacillus</taxon>
    </lineage>
</organism>
<name>RL23_ACIF2</name>
<sequence>MNAERKYLVLLAPVISEKSTMVQQQANQFVFKVARDATKREIRSAVEKLFEVQVLSVQTCNYLGKEKRVGRHVGRRSSWKKAYVRLAEGSSIDYGVA</sequence>
<gene>
    <name evidence="1" type="primary">rplW</name>
    <name type="ordered locus">AFE_0329</name>
</gene>
<dbReference type="EMBL" id="CP001219">
    <property type="protein sequence ID" value="ACK79834.1"/>
    <property type="molecule type" value="Genomic_DNA"/>
</dbReference>
<dbReference type="RefSeq" id="WP_012536087.1">
    <property type="nucleotide sequence ID" value="NC_011761.1"/>
</dbReference>
<dbReference type="SMR" id="B7J469"/>
<dbReference type="STRING" id="243159.AFE_0329"/>
<dbReference type="PaxDb" id="243159-AFE_0329"/>
<dbReference type="GeneID" id="65279708"/>
<dbReference type="KEGG" id="afr:AFE_0329"/>
<dbReference type="eggNOG" id="COG0089">
    <property type="taxonomic scope" value="Bacteria"/>
</dbReference>
<dbReference type="HOGENOM" id="CLU_037562_3_1_6"/>
<dbReference type="Proteomes" id="UP000001362">
    <property type="component" value="Chromosome"/>
</dbReference>
<dbReference type="GO" id="GO:1990904">
    <property type="term" value="C:ribonucleoprotein complex"/>
    <property type="evidence" value="ECO:0007669"/>
    <property type="project" value="UniProtKB-KW"/>
</dbReference>
<dbReference type="GO" id="GO:0005840">
    <property type="term" value="C:ribosome"/>
    <property type="evidence" value="ECO:0007669"/>
    <property type="project" value="UniProtKB-KW"/>
</dbReference>
<dbReference type="GO" id="GO:0019843">
    <property type="term" value="F:rRNA binding"/>
    <property type="evidence" value="ECO:0007669"/>
    <property type="project" value="UniProtKB-UniRule"/>
</dbReference>
<dbReference type="GO" id="GO:0003735">
    <property type="term" value="F:structural constituent of ribosome"/>
    <property type="evidence" value="ECO:0007669"/>
    <property type="project" value="InterPro"/>
</dbReference>
<dbReference type="GO" id="GO:0006412">
    <property type="term" value="P:translation"/>
    <property type="evidence" value="ECO:0007669"/>
    <property type="project" value="UniProtKB-UniRule"/>
</dbReference>
<dbReference type="FunFam" id="3.30.70.330:FF:000001">
    <property type="entry name" value="50S ribosomal protein L23"/>
    <property type="match status" value="1"/>
</dbReference>
<dbReference type="Gene3D" id="3.30.70.330">
    <property type="match status" value="1"/>
</dbReference>
<dbReference type="HAMAP" id="MF_01369_B">
    <property type="entry name" value="Ribosomal_uL23_B"/>
    <property type="match status" value="1"/>
</dbReference>
<dbReference type="InterPro" id="IPR012677">
    <property type="entry name" value="Nucleotide-bd_a/b_plait_sf"/>
</dbReference>
<dbReference type="InterPro" id="IPR013025">
    <property type="entry name" value="Ribosomal_uL23-like"/>
</dbReference>
<dbReference type="InterPro" id="IPR012678">
    <property type="entry name" value="Ribosomal_uL23/eL15/eS24_sf"/>
</dbReference>
<dbReference type="NCBIfam" id="NF004359">
    <property type="entry name" value="PRK05738.1-3"/>
    <property type="match status" value="1"/>
</dbReference>
<dbReference type="NCBIfam" id="NF004363">
    <property type="entry name" value="PRK05738.2-4"/>
    <property type="match status" value="1"/>
</dbReference>
<dbReference type="NCBIfam" id="NF004366">
    <property type="entry name" value="PRK05738.3-2"/>
    <property type="match status" value="1"/>
</dbReference>
<dbReference type="PANTHER" id="PTHR11620">
    <property type="entry name" value="60S RIBOSOMAL PROTEIN L23A"/>
    <property type="match status" value="1"/>
</dbReference>
<dbReference type="Pfam" id="PF00276">
    <property type="entry name" value="Ribosomal_L23"/>
    <property type="match status" value="1"/>
</dbReference>
<dbReference type="SUPFAM" id="SSF54189">
    <property type="entry name" value="Ribosomal proteins S24e, L23 and L15e"/>
    <property type="match status" value="1"/>
</dbReference>
<accession>B7J469</accession>
<comment type="function">
    <text evidence="1">One of the early assembly proteins it binds 23S rRNA. One of the proteins that surrounds the polypeptide exit tunnel on the outside of the ribosome. Forms the main docking site for trigger factor binding to the ribosome.</text>
</comment>
<comment type="subunit">
    <text evidence="1">Part of the 50S ribosomal subunit. Contacts protein L29, and trigger factor when it is bound to the ribosome.</text>
</comment>
<comment type="similarity">
    <text evidence="1">Belongs to the universal ribosomal protein uL23 family.</text>
</comment>
<reference key="1">
    <citation type="journal article" date="2008" name="BMC Genomics">
        <title>Acidithiobacillus ferrooxidans metabolism: from genome sequence to industrial applications.</title>
        <authorList>
            <person name="Valdes J."/>
            <person name="Pedroso I."/>
            <person name="Quatrini R."/>
            <person name="Dodson R.J."/>
            <person name="Tettelin H."/>
            <person name="Blake R. II"/>
            <person name="Eisen J.A."/>
            <person name="Holmes D.S."/>
        </authorList>
    </citation>
    <scope>NUCLEOTIDE SEQUENCE [LARGE SCALE GENOMIC DNA]</scope>
    <source>
        <strain>ATCC 23270 / DSM 14882 / CIP 104768 / NCIMB 8455</strain>
    </source>
</reference>
<proteinExistence type="inferred from homology"/>
<feature type="chain" id="PRO_1000144520" description="Large ribosomal subunit protein uL23">
    <location>
        <begin position="1"/>
        <end position="97"/>
    </location>
</feature>
<evidence type="ECO:0000255" key="1">
    <source>
        <dbReference type="HAMAP-Rule" id="MF_01369"/>
    </source>
</evidence>
<evidence type="ECO:0000305" key="2"/>
<keyword id="KW-1185">Reference proteome</keyword>
<keyword id="KW-0687">Ribonucleoprotein</keyword>
<keyword id="KW-0689">Ribosomal protein</keyword>
<keyword id="KW-0694">RNA-binding</keyword>
<keyword id="KW-0699">rRNA-binding</keyword>